<dbReference type="EMBL" id="GQ981400">
    <property type="protein sequence ID" value="ADN79119.1"/>
    <property type="status" value="ALT_INIT"/>
    <property type="molecule type" value="mRNA"/>
</dbReference>
<dbReference type="PDB" id="1IEN">
    <property type="method" value="NMR"/>
    <property type="chains" value="A=39-57"/>
</dbReference>
<dbReference type="PDB" id="2LR9">
    <property type="method" value="NMR"/>
    <property type="chains" value="A=39-57"/>
</dbReference>
<dbReference type="PDBsum" id="1IEN"/>
<dbReference type="PDBsum" id="2LR9"/>
<dbReference type="BMRB" id="P58811"/>
<dbReference type="SMR" id="P58811"/>
<dbReference type="TCDB" id="8.B.32.1.9">
    <property type="family name" value="the nicotinic acetylcholine receptor-targeting alpha-conotoxin (a-conotoxin) family"/>
</dbReference>
<dbReference type="EvolutionaryTrace" id="P58811"/>
<dbReference type="GO" id="GO:0005576">
    <property type="term" value="C:extracellular region"/>
    <property type="evidence" value="ECO:0007669"/>
    <property type="project" value="UniProtKB-SubCell"/>
</dbReference>
<dbReference type="GO" id="GO:0035792">
    <property type="term" value="C:host cell postsynaptic membrane"/>
    <property type="evidence" value="ECO:0007669"/>
    <property type="project" value="UniProtKB-KW"/>
</dbReference>
<dbReference type="GO" id="GO:0030550">
    <property type="term" value="F:acetylcholine receptor inhibitor activity"/>
    <property type="evidence" value="ECO:0007669"/>
    <property type="project" value="UniProtKB-KW"/>
</dbReference>
<dbReference type="GO" id="GO:0090729">
    <property type="term" value="F:toxin activity"/>
    <property type="evidence" value="ECO:0007669"/>
    <property type="project" value="UniProtKB-KW"/>
</dbReference>
<dbReference type="InterPro" id="IPR009958">
    <property type="entry name" value="Conotoxin_a-typ"/>
</dbReference>
<dbReference type="Pfam" id="PF07365">
    <property type="entry name" value="Toxin_8"/>
    <property type="match status" value="1"/>
</dbReference>
<feature type="signal peptide" evidence="2">
    <location>
        <begin position="1"/>
        <end position="16"/>
    </location>
</feature>
<feature type="propeptide" id="PRO_0000404204" evidence="3">
    <location>
        <begin position="17"/>
        <end position="38"/>
    </location>
</feature>
<feature type="peptide" id="PRO_0000044510" description="Rho-conotoxin TIA" evidence="3">
    <location>
        <begin position="39"/>
        <end position="57"/>
    </location>
</feature>
<feature type="region of interest" description="Interaction with ADRA1B">
    <location>
        <begin position="40"/>
        <end position="42"/>
    </location>
</feature>
<feature type="region of interest" description="Lacks the Ser-Xaa-Pro motif that is crucial for potent interaction with nAChR" evidence="9">
    <location>
        <begin position="45"/>
        <end position="47"/>
    </location>
</feature>
<feature type="modified residue" description="Cysteine amide" evidence="3">
    <location>
        <position position="57"/>
    </location>
</feature>
<feature type="disulfide bond" evidence="3 7 12 13">
    <location>
        <begin position="43"/>
        <end position="49"/>
    </location>
</feature>
<feature type="disulfide bond" evidence="3 7 12 13">
    <location>
        <begin position="44"/>
        <end position="57"/>
    </location>
</feature>
<feature type="mutagenesis site" description="Little loss in inhibition." evidence="4">
    <original>N</original>
    <variation>A</variation>
    <location>
        <position position="40"/>
    </location>
</feature>
<feature type="mutagenesis site" description="Important loss in inhibition." evidence="4">
    <original>W</original>
    <variation>A</variation>
    <location>
        <position position="41"/>
    </location>
</feature>
<feature type="mutagenesis site" description="Most important loss in inhibition." evidence="4">
    <original>R</original>
    <variation>A</variation>
    <location>
        <position position="42"/>
    </location>
</feature>
<feature type="mutagenesis site" description="Little loss in inhibition." evidence="4">
    <original>L</original>
    <variation>A</variation>
    <location>
        <position position="45"/>
    </location>
</feature>
<feature type="mutagenesis site" description="Important loss in inhibition, and change from non-competitive to competitive antagonist of alpha-1B receptor subtype." evidence="4 5">
    <original>I</original>
    <variation>A</variation>
    <location>
        <position position="46"/>
    </location>
</feature>
<feature type="mutagenesis site" description="Little loss in inhibition." evidence="4">
    <original>R</original>
    <variation>A</variation>
    <location>
        <position position="50"/>
    </location>
</feature>
<feature type="mutagenesis site" description="Selectivity increase for alpha-1B subtype." evidence="5">
    <original>F</original>
    <variation>A</variation>
    <variation>N</variation>
    <location>
        <position position="56"/>
    </location>
</feature>
<feature type="helix" evidence="14">
    <location>
        <begin position="42"/>
        <end position="45"/>
    </location>
</feature>
<feature type="helix" evidence="14">
    <location>
        <begin position="47"/>
        <end position="50"/>
    </location>
</feature>
<feature type="helix" evidence="14">
    <location>
        <begin position="54"/>
        <end position="56"/>
    </location>
</feature>
<organism>
    <name type="scientific">Conus tulipa</name>
    <name type="common">Fish-hunting cone snail</name>
    <name type="synonym">Tulip cone</name>
    <dbReference type="NCBI Taxonomy" id="6495"/>
    <lineage>
        <taxon>Eukaryota</taxon>
        <taxon>Metazoa</taxon>
        <taxon>Spiralia</taxon>
        <taxon>Lophotrochozoa</taxon>
        <taxon>Mollusca</taxon>
        <taxon>Gastropoda</taxon>
        <taxon>Caenogastropoda</taxon>
        <taxon>Neogastropoda</taxon>
        <taxon>Conoidea</taxon>
        <taxon>Conidae</taxon>
        <taxon>Conus</taxon>
        <taxon>Gastridium</taxon>
    </lineage>
</organism>
<sequence length="58" mass="6395">MFTVFLLVVLATTGVSFTLDRASDGGNAVAKKSDVTARFNWRCCLIPACRRNHKKFCG</sequence>
<evidence type="ECO:0000250" key="1">
    <source>
        <dbReference type="UniProtKB" id="Q2I2R8"/>
    </source>
</evidence>
<evidence type="ECO:0000255" key="2"/>
<evidence type="ECO:0000269" key="3">
    <source>
    </source>
</evidence>
<evidence type="ECO:0000269" key="4">
    <source>
    </source>
</evidence>
<evidence type="ECO:0000269" key="5">
    <source>
    </source>
</evidence>
<evidence type="ECO:0000269" key="6">
    <source>
    </source>
</evidence>
<evidence type="ECO:0000269" key="7">
    <source>
    </source>
</evidence>
<evidence type="ECO:0000303" key="8">
    <source>
    </source>
</evidence>
<evidence type="ECO:0000305" key="9"/>
<evidence type="ECO:0000305" key="10">
    <source>
    </source>
</evidence>
<evidence type="ECO:0000305" key="11">
    <source>
    </source>
</evidence>
<evidence type="ECO:0000312" key="12">
    <source>
        <dbReference type="PDB" id="1IEN"/>
    </source>
</evidence>
<evidence type="ECO:0000312" key="13">
    <source>
        <dbReference type="PDB" id="2LR9"/>
    </source>
</evidence>
<evidence type="ECO:0007829" key="14">
    <source>
        <dbReference type="PDB" id="1IEN"/>
    </source>
</evidence>
<name>CA1A_CONTU</name>
<protein>
    <recommendedName>
        <fullName evidence="8">Rho-conotoxin TIA</fullName>
        <shortName evidence="8">Rho-TIA</shortName>
    </recommendedName>
</protein>
<proteinExistence type="evidence at protein level"/>
<keyword id="KW-0002">3D-structure</keyword>
<keyword id="KW-0008">Acetylcholine receptor inhibiting toxin</keyword>
<keyword id="KW-0027">Amidation</keyword>
<keyword id="KW-0903">Direct protein sequencing</keyword>
<keyword id="KW-1015">Disulfide bond</keyword>
<keyword id="KW-1213">G-protein coupled receptor impairing toxin</keyword>
<keyword id="KW-0528">Neurotoxin</keyword>
<keyword id="KW-0629">Postsynaptic neurotoxin</keyword>
<keyword id="KW-0964">Secreted</keyword>
<keyword id="KW-0732">Signal</keyword>
<keyword id="KW-0800">Toxin</keyword>
<accession>P58811</accession>
<accession>E2DEK8</accession>
<reference key="1">
    <citation type="submission" date="2009-09" db="EMBL/GenBank/DDBJ databases">
        <title>Superfamily, scaffold and functions: review and phylogenetic classification of conotoxins.</title>
        <authorList>
            <person name="Puillandre N."/>
            <person name="Olivera B.M."/>
        </authorList>
    </citation>
    <scope>NUCLEOTIDE SEQUENCE [MRNA]</scope>
</reference>
<reference key="2">
    <citation type="journal article" date="2001" name="Nat. Neurosci.">
        <title>Two new classes of conopeptides inhibit the alpha1-adrenoceptor and noradrenaline transporter.</title>
        <authorList>
            <person name="Sharpe I.A."/>
            <person name="Gehrmann J."/>
            <person name="Loughnan M.L."/>
            <person name="Thomas L."/>
            <person name="Adams D.A."/>
            <person name="Atkins A."/>
            <person name="Palant E."/>
            <person name="Craik D.J."/>
            <person name="Adams D.J."/>
            <person name="Alewood P.F."/>
            <person name="Lewis R.J."/>
        </authorList>
    </citation>
    <scope>PROTEIN SEQUENCE OF 39-57</scope>
    <scope>FUNCTION</scope>
    <scope>STRUCTURE BY NMR OF 39-57</scope>
    <scope>AMIDATION AT CYS-57</scope>
    <scope>DISULFIDE BONDS</scope>
    <scope>SYNTHESIS OF 39-57</scope>
    <scope>MASS SPECTROMETRY</scope>
    <scope>SUBCELLULAR LOCATION</scope>
    <source>
        <tissue>Venom</tissue>
    </source>
</reference>
<reference key="3">
    <citation type="journal article" date="2003" name="J. Biol. Chem.">
        <title>Allosteric alpha 1-adrenoreceptor antagonism by the conopeptide rho-TIA.</title>
        <authorList>
            <person name="Sharpe I.A."/>
            <person name="Thomas L."/>
            <person name="Loughnan M.L."/>
            <person name="Motin L."/>
            <person name="Palant E."/>
            <person name="Croker D.E."/>
            <person name="Alewood D."/>
            <person name="Chen S."/>
            <person name="Graham R.M."/>
            <person name="Alewood P.F."/>
            <person name="Adams D.J."/>
            <person name="Lewis R.J."/>
        </authorList>
    </citation>
    <scope>FUNCTION</scope>
    <scope>SYNTHESIS OF 39-57</scope>
    <scope>MUTAGENESIS OF ASN-40; TRP-41; ARG-42; LEU-45; ILE-46 AND ARG-50</scope>
</reference>
<reference key="4">
    <citation type="journal article" date="2004" name="J. Biol. Chem.">
        <title>Subtype-selective noncompetitive or competitive inhibition of human alpha1-adrenergic receptors by rho-TIA.</title>
        <authorList>
            <person name="Chen Z."/>
            <person name="Rogge G."/>
            <person name="Hague C."/>
            <person name="Alewood D."/>
            <person name="Colless B."/>
            <person name="Lewis R.J."/>
            <person name="Minneman K.P."/>
        </authorList>
    </citation>
    <scope>FUNCTION</scope>
    <scope>MUTAGENESIS OF ILE-46 AND PHE-56</scope>
</reference>
<reference key="5">
    <citation type="journal article" date="2005" name="Eur. J. Pharmacol.">
        <title>Differential antagonism by conotoxin rho-TIA of contractions mediated by distinct alpha1-adrenoceptor subtypes in rat vas deferens, spleen and aorta.</title>
        <authorList>
            <person name="Lima V."/>
            <person name="Mueller A."/>
            <person name="Kamikihara S.Y."/>
            <person name="Raymundi V."/>
            <person name="Alewood D."/>
            <person name="Lewis R.J."/>
            <person name="Chen Z."/>
            <person name="Minneman K.P."/>
            <person name="Pupo A.S."/>
        </authorList>
    </citation>
    <scope>FUNCTION</scope>
</reference>
<reference key="6">
    <citation type="journal article" date="2013" name="J. Biol. Chem.">
        <title>Conopeptide rho-TIA defines a new allosteric site on the extracellular surface of the alpha1B-adrenoceptor.</title>
        <authorList>
            <person name="Ragnarsson L."/>
            <person name="Wang C.I."/>
            <person name="Andersson A."/>
            <person name="Fajarningsih D."/>
            <person name="Monks T."/>
            <person name="Brust A."/>
            <person name="Rosengren K.J."/>
            <person name="Lewis R.J."/>
        </authorList>
    </citation>
    <scope>FUNCTION</scope>
    <scope>STRUCTURE BY NMR OF 39-57</scope>
    <scope>INTERACTING REGION OF 40-42 WITH ADRA1B</scope>
    <scope>DISULFIDE BONDS</scope>
</reference>
<comment type="function">
    <text evidence="1 3 4 5 6 7">Allosteric inhibitor of alpha-1B adrenergic receptors (ADRA1B). Binds to an allosteric modulatory site on transmembrane helix 6 and 7 at the base of extracellular loop 3 of ADRA1B (PubMed:23184947). Also weakly inhibits alpha-1A (ADRA1A) and alpha-1D (ADRA1D) adrenergic receptors in a competitive manner (PubMed:15194691). Potently inhibits contractions of vas deferens, spleen and aorta in response to noradrenaline (PubMed:15680270). May also inhibits nicotinic acetylcholine receptors with a possible distinct nAChR binding mode from other alpha-conotoxins, due to a different three residue motif (lacks the Ser-Xaa-Pro motif) (By similarity).</text>
</comment>
<comment type="subcellular location">
    <subcellularLocation>
        <location evidence="3">Secreted</location>
    </subcellularLocation>
</comment>
<comment type="tissue specificity">
    <text evidence="10">Expressed by the venom duct.</text>
</comment>
<comment type="domain">
    <text evidence="9">The cysteine framework is I (CC-C-C). Alpha4/7 pattern.</text>
</comment>
<comment type="mass spectrometry" mass="2390.15" method="Electrospray" evidence="3"/>
<comment type="miscellaneous">
    <text evidence="10 11">Negative results: has no effect on alpha-2 adrenergic receptors (ADRA2) (PubMed:11528421, PubMed:12824165).</text>
</comment>
<comment type="similarity">
    <text evidence="9">Belongs to the conotoxin A superfamily.</text>
</comment>
<comment type="sequence caution" evidence="9">
    <conflict type="erroneous initiation">
        <sequence resource="EMBL-CDS" id="ADN79119"/>
    </conflict>
    <text>Extended N-terminus.</text>
</comment>